<name>PPI1_STAAW</name>
<feature type="chain" id="PRO_0000299087" description="Putative peptidyl-prolyl cis-trans isomerase">
    <location>
        <begin position="1"/>
        <end position="197"/>
    </location>
</feature>
<feature type="domain" description="PPIase cyclophilin-type" evidence="2">
    <location>
        <begin position="14"/>
        <end position="195"/>
    </location>
</feature>
<protein>
    <recommendedName>
        <fullName>Putative peptidyl-prolyl cis-trans isomerase</fullName>
        <shortName>PPIase</shortName>
        <ecNumber>5.2.1.8</ecNumber>
    </recommendedName>
    <alternativeName>
        <fullName>Rotamase</fullName>
    </alternativeName>
</protein>
<reference key="1">
    <citation type="journal article" date="2002" name="Lancet">
        <title>Genome and virulence determinants of high virulence community-acquired MRSA.</title>
        <authorList>
            <person name="Baba T."/>
            <person name="Takeuchi F."/>
            <person name="Kuroda M."/>
            <person name="Yuzawa H."/>
            <person name="Aoki K."/>
            <person name="Oguchi A."/>
            <person name="Nagai Y."/>
            <person name="Iwama N."/>
            <person name="Asano K."/>
            <person name="Naimi T."/>
            <person name="Kuroda H."/>
            <person name="Cui L."/>
            <person name="Yamamoto K."/>
            <person name="Hiramatsu K."/>
        </authorList>
    </citation>
    <scope>NUCLEOTIDE SEQUENCE [LARGE SCALE GENOMIC DNA]</scope>
    <source>
        <strain>MW2</strain>
    </source>
</reference>
<dbReference type="EC" id="5.2.1.8"/>
<dbReference type="EMBL" id="BA000033">
    <property type="protein sequence ID" value="BAB94701.1"/>
    <property type="molecule type" value="Genomic_DNA"/>
</dbReference>
<dbReference type="RefSeq" id="WP_000035058.1">
    <property type="nucleotide sequence ID" value="NC_003923.1"/>
</dbReference>
<dbReference type="SMR" id="Q7A1C0"/>
<dbReference type="KEGG" id="sam:MW0836"/>
<dbReference type="HOGENOM" id="CLU_012062_16_0_9"/>
<dbReference type="GO" id="GO:0003755">
    <property type="term" value="F:peptidyl-prolyl cis-trans isomerase activity"/>
    <property type="evidence" value="ECO:0007669"/>
    <property type="project" value="UniProtKB-KW"/>
</dbReference>
<dbReference type="Gene3D" id="2.40.100.10">
    <property type="entry name" value="Cyclophilin-like"/>
    <property type="match status" value="1"/>
</dbReference>
<dbReference type="InterPro" id="IPR029000">
    <property type="entry name" value="Cyclophilin-like_dom_sf"/>
</dbReference>
<dbReference type="InterPro" id="IPR024936">
    <property type="entry name" value="Cyclophilin-type_PPIase"/>
</dbReference>
<dbReference type="InterPro" id="IPR002130">
    <property type="entry name" value="Cyclophilin-type_PPIase_dom"/>
</dbReference>
<dbReference type="InterPro" id="IPR044666">
    <property type="entry name" value="Cyclophilin_A-like"/>
</dbReference>
<dbReference type="PANTHER" id="PTHR45625">
    <property type="entry name" value="PEPTIDYL-PROLYL CIS-TRANS ISOMERASE-RELATED"/>
    <property type="match status" value="1"/>
</dbReference>
<dbReference type="PANTHER" id="PTHR45625:SF4">
    <property type="entry name" value="PEPTIDYLPROLYL ISOMERASE DOMAIN AND WD REPEAT-CONTAINING PROTEIN 1"/>
    <property type="match status" value="1"/>
</dbReference>
<dbReference type="Pfam" id="PF00160">
    <property type="entry name" value="Pro_isomerase"/>
    <property type="match status" value="1"/>
</dbReference>
<dbReference type="PIRSF" id="PIRSF001467">
    <property type="entry name" value="Peptidylpro_ismrse"/>
    <property type="match status" value="1"/>
</dbReference>
<dbReference type="PRINTS" id="PR00153">
    <property type="entry name" value="CSAPPISMRASE"/>
</dbReference>
<dbReference type="SUPFAM" id="SSF50891">
    <property type="entry name" value="Cyclophilin-like"/>
    <property type="match status" value="1"/>
</dbReference>
<dbReference type="PROSITE" id="PS50072">
    <property type="entry name" value="CSA_PPIASE_2"/>
    <property type="match status" value="1"/>
</dbReference>
<keyword id="KW-0413">Isomerase</keyword>
<keyword id="KW-0697">Rotamase</keyword>
<sequence length="197" mass="21619">MANYPQLNKEVQQGEIKVVMHTNKGDMTFKLFPNIAPKTVENFVTHAKNGYYDGITFHRVINDFMIQGGDPTATGMGGESIYGGAFEDEFSLNAFNLYGALSMANSGPNTNGSQFFIVQMKEVPQNMLSQLADGGWPQPIVDAYGEKGGTPWLDQKHTVFGQIIDGETTLEDIANTKVGPQDKPLHDVVIESIDVEE</sequence>
<organism>
    <name type="scientific">Staphylococcus aureus (strain MW2)</name>
    <dbReference type="NCBI Taxonomy" id="196620"/>
    <lineage>
        <taxon>Bacteria</taxon>
        <taxon>Bacillati</taxon>
        <taxon>Bacillota</taxon>
        <taxon>Bacilli</taxon>
        <taxon>Bacillales</taxon>
        <taxon>Staphylococcaceae</taxon>
        <taxon>Staphylococcus</taxon>
    </lineage>
</organism>
<comment type="function">
    <text evidence="1">PPIases accelerate the folding of proteins. It catalyzes the cis-trans isomerization of proline imidic peptide bonds in oligopeptides (By similarity).</text>
</comment>
<comment type="catalytic activity">
    <reaction>
        <text>[protein]-peptidylproline (omega=180) = [protein]-peptidylproline (omega=0)</text>
        <dbReference type="Rhea" id="RHEA:16237"/>
        <dbReference type="Rhea" id="RHEA-COMP:10747"/>
        <dbReference type="Rhea" id="RHEA-COMP:10748"/>
        <dbReference type="ChEBI" id="CHEBI:83833"/>
        <dbReference type="ChEBI" id="CHEBI:83834"/>
        <dbReference type="EC" id="5.2.1.8"/>
    </reaction>
</comment>
<comment type="similarity">
    <text evidence="3">Belongs to the cyclophilin-type PPIase family.</text>
</comment>
<gene>
    <name type="ordered locus">MW0836</name>
</gene>
<proteinExistence type="inferred from homology"/>
<evidence type="ECO:0000250" key="1"/>
<evidence type="ECO:0000255" key="2">
    <source>
        <dbReference type="PROSITE-ProRule" id="PRU00156"/>
    </source>
</evidence>
<evidence type="ECO:0000305" key="3"/>
<accession>Q7A1C0</accession>